<reference key="1">
    <citation type="submission" date="2006-08" db="EMBL/GenBank/DDBJ databases">
        <title>Complete sequence of Shewanella frigidimarina NCIMB 400.</title>
        <authorList>
            <consortium name="US DOE Joint Genome Institute"/>
            <person name="Copeland A."/>
            <person name="Lucas S."/>
            <person name="Lapidus A."/>
            <person name="Barry K."/>
            <person name="Detter J.C."/>
            <person name="Glavina del Rio T."/>
            <person name="Hammon N."/>
            <person name="Israni S."/>
            <person name="Dalin E."/>
            <person name="Tice H."/>
            <person name="Pitluck S."/>
            <person name="Fredrickson J.K."/>
            <person name="Kolker E."/>
            <person name="McCuel L.A."/>
            <person name="DiChristina T."/>
            <person name="Nealson K.H."/>
            <person name="Newman D."/>
            <person name="Tiedje J.M."/>
            <person name="Zhou J."/>
            <person name="Romine M.F."/>
            <person name="Culley D.E."/>
            <person name="Serres M."/>
            <person name="Chertkov O."/>
            <person name="Brettin T."/>
            <person name="Bruce D."/>
            <person name="Han C."/>
            <person name="Tapia R."/>
            <person name="Gilna P."/>
            <person name="Schmutz J."/>
            <person name="Larimer F."/>
            <person name="Land M."/>
            <person name="Hauser L."/>
            <person name="Kyrpides N."/>
            <person name="Mikhailova N."/>
            <person name="Richardson P."/>
        </authorList>
    </citation>
    <scope>NUCLEOTIDE SEQUENCE [LARGE SCALE GENOMIC DNA]</scope>
    <source>
        <strain>NCIMB 400</strain>
    </source>
</reference>
<feature type="chain" id="PRO_1000020935" description="Protease HtpX">
    <location>
        <begin position="1"/>
        <end position="287"/>
    </location>
</feature>
<feature type="transmembrane region" description="Helical" evidence="1">
    <location>
        <begin position="4"/>
        <end position="24"/>
    </location>
</feature>
<feature type="transmembrane region" description="Helical" evidence="1">
    <location>
        <begin position="33"/>
        <end position="53"/>
    </location>
</feature>
<feature type="transmembrane region" description="Helical" evidence="1">
    <location>
        <begin position="154"/>
        <end position="174"/>
    </location>
</feature>
<feature type="transmembrane region" description="Helical" evidence="1">
    <location>
        <begin position="195"/>
        <end position="215"/>
    </location>
</feature>
<feature type="active site" evidence="1">
    <location>
        <position position="140"/>
    </location>
</feature>
<feature type="binding site" evidence="1">
    <location>
        <position position="139"/>
    </location>
    <ligand>
        <name>Zn(2+)</name>
        <dbReference type="ChEBI" id="CHEBI:29105"/>
        <note>catalytic</note>
    </ligand>
</feature>
<feature type="binding site" evidence="1">
    <location>
        <position position="143"/>
    </location>
    <ligand>
        <name>Zn(2+)</name>
        <dbReference type="ChEBI" id="CHEBI:29105"/>
        <note>catalytic</note>
    </ligand>
</feature>
<feature type="binding site" evidence="1">
    <location>
        <position position="220"/>
    </location>
    <ligand>
        <name>Zn(2+)</name>
        <dbReference type="ChEBI" id="CHEBI:29105"/>
        <note>catalytic</note>
    </ligand>
</feature>
<proteinExistence type="inferred from homology"/>
<accession>Q083Z6</accession>
<protein>
    <recommendedName>
        <fullName evidence="1">Protease HtpX</fullName>
        <ecNumber evidence="1">3.4.24.-</ecNumber>
    </recommendedName>
    <alternativeName>
        <fullName evidence="1">Heat shock protein HtpX</fullName>
    </alternativeName>
</protein>
<evidence type="ECO:0000255" key="1">
    <source>
        <dbReference type="HAMAP-Rule" id="MF_00188"/>
    </source>
</evidence>
<sequence>MKRIFLLIATNFAILLVASIVMSILGVNTSTMGGLLVFAAIFGFGGSFISLAISKWMAKKTMGCEVITQPRDSMERWLVETVARQAEKSGIKMPEVAIYQSPEMNAFATGPSKNNALVAVSSGLLYGMTQDEIEGVLAHEVSHVANGDMVTLTLIQGVVNTFVIFAARVVAGIINNFVSSNDEEGEGLGMFAYMAVVFVLDMLFGILASMIVAYFSRIREFKADEGAARLAGKNKMIAALERLRQGPESGAMPAQMSAFGINGKRSIAELMMSHPPLEKRIAALKNS</sequence>
<name>HTPX_SHEFN</name>
<dbReference type="EC" id="3.4.24.-" evidence="1"/>
<dbReference type="EMBL" id="CP000447">
    <property type="protein sequence ID" value="ABI71419.1"/>
    <property type="molecule type" value="Genomic_DNA"/>
</dbReference>
<dbReference type="RefSeq" id="WP_011637037.1">
    <property type="nucleotide sequence ID" value="NC_008345.1"/>
</dbReference>
<dbReference type="STRING" id="318167.Sfri_1568"/>
<dbReference type="MEROPS" id="M48.002"/>
<dbReference type="KEGG" id="sfr:Sfri_1568"/>
<dbReference type="eggNOG" id="COG0501">
    <property type="taxonomic scope" value="Bacteria"/>
</dbReference>
<dbReference type="HOGENOM" id="CLU_042266_1_0_6"/>
<dbReference type="OrthoDB" id="15218at2"/>
<dbReference type="Proteomes" id="UP000000684">
    <property type="component" value="Chromosome"/>
</dbReference>
<dbReference type="GO" id="GO:0005886">
    <property type="term" value="C:plasma membrane"/>
    <property type="evidence" value="ECO:0007669"/>
    <property type="project" value="UniProtKB-SubCell"/>
</dbReference>
<dbReference type="GO" id="GO:0004222">
    <property type="term" value="F:metalloendopeptidase activity"/>
    <property type="evidence" value="ECO:0007669"/>
    <property type="project" value="UniProtKB-UniRule"/>
</dbReference>
<dbReference type="GO" id="GO:0008270">
    <property type="term" value="F:zinc ion binding"/>
    <property type="evidence" value="ECO:0007669"/>
    <property type="project" value="UniProtKB-UniRule"/>
</dbReference>
<dbReference type="GO" id="GO:0006508">
    <property type="term" value="P:proteolysis"/>
    <property type="evidence" value="ECO:0007669"/>
    <property type="project" value="UniProtKB-KW"/>
</dbReference>
<dbReference type="CDD" id="cd07335">
    <property type="entry name" value="M48B_HtpX_like"/>
    <property type="match status" value="1"/>
</dbReference>
<dbReference type="Gene3D" id="3.30.2010.10">
    <property type="entry name" value="Metalloproteases ('zincins'), catalytic domain"/>
    <property type="match status" value="1"/>
</dbReference>
<dbReference type="HAMAP" id="MF_00188">
    <property type="entry name" value="Pept_M48_protease_HtpX"/>
    <property type="match status" value="1"/>
</dbReference>
<dbReference type="InterPro" id="IPR050083">
    <property type="entry name" value="HtpX_protease"/>
</dbReference>
<dbReference type="InterPro" id="IPR022919">
    <property type="entry name" value="Pept_M48_protease_HtpX"/>
</dbReference>
<dbReference type="InterPro" id="IPR001915">
    <property type="entry name" value="Peptidase_M48"/>
</dbReference>
<dbReference type="NCBIfam" id="NF003965">
    <property type="entry name" value="PRK05457.1"/>
    <property type="match status" value="1"/>
</dbReference>
<dbReference type="PANTHER" id="PTHR43221">
    <property type="entry name" value="PROTEASE HTPX"/>
    <property type="match status" value="1"/>
</dbReference>
<dbReference type="PANTHER" id="PTHR43221:SF1">
    <property type="entry name" value="PROTEASE HTPX"/>
    <property type="match status" value="1"/>
</dbReference>
<dbReference type="Pfam" id="PF01435">
    <property type="entry name" value="Peptidase_M48"/>
    <property type="match status" value="1"/>
</dbReference>
<organism>
    <name type="scientific">Shewanella frigidimarina (strain NCIMB 400)</name>
    <dbReference type="NCBI Taxonomy" id="318167"/>
    <lineage>
        <taxon>Bacteria</taxon>
        <taxon>Pseudomonadati</taxon>
        <taxon>Pseudomonadota</taxon>
        <taxon>Gammaproteobacteria</taxon>
        <taxon>Alteromonadales</taxon>
        <taxon>Shewanellaceae</taxon>
        <taxon>Shewanella</taxon>
    </lineage>
</organism>
<comment type="cofactor">
    <cofactor evidence="1">
        <name>Zn(2+)</name>
        <dbReference type="ChEBI" id="CHEBI:29105"/>
    </cofactor>
    <text evidence="1">Binds 1 zinc ion per subunit.</text>
</comment>
<comment type="subcellular location">
    <subcellularLocation>
        <location evidence="1">Cell inner membrane</location>
        <topology evidence="1">Multi-pass membrane protein</topology>
    </subcellularLocation>
</comment>
<comment type="similarity">
    <text evidence="1">Belongs to the peptidase M48B family.</text>
</comment>
<gene>
    <name evidence="1" type="primary">htpX</name>
    <name type="ordered locus">Sfri_1568</name>
</gene>
<keyword id="KW-0997">Cell inner membrane</keyword>
<keyword id="KW-1003">Cell membrane</keyword>
<keyword id="KW-0378">Hydrolase</keyword>
<keyword id="KW-0472">Membrane</keyword>
<keyword id="KW-0479">Metal-binding</keyword>
<keyword id="KW-0482">Metalloprotease</keyword>
<keyword id="KW-0645">Protease</keyword>
<keyword id="KW-1185">Reference proteome</keyword>
<keyword id="KW-0812">Transmembrane</keyword>
<keyword id="KW-1133">Transmembrane helix</keyword>
<keyword id="KW-0862">Zinc</keyword>